<comment type="function">
    <text evidence="1">Part of the energy-coupling factor (ECF) transporter complex CbiMNOQ involved in cobalt import.</text>
</comment>
<comment type="pathway">
    <text evidence="1">Cofactor biosynthesis; adenosylcobalamin biosynthesis.</text>
</comment>
<comment type="subunit">
    <text evidence="1">Forms an energy-coupling factor (ECF) transporter complex composed of an ATP-binding protein (A component, CbiO), a transmembrane protein (T component, CbiQ) and 2 possible substrate-capture proteins (S components, CbiM and CbiN) of unknown stoichimetry.</text>
</comment>
<comment type="subcellular location">
    <subcellularLocation>
        <location evidence="1">Cell membrane</location>
        <topology evidence="1">Multi-pass membrane protein</topology>
    </subcellularLocation>
</comment>
<comment type="similarity">
    <text evidence="1">Belongs to the CbiM family.</text>
</comment>
<organism>
    <name type="scientific">Thermosediminibacter oceani (strain ATCC BAA-1034 / DSM 16646 / JW/IW-1228P)</name>
    <dbReference type="NCBI Taxonomy" id="555079"/>
    <lineage>
        <taxon>Bacteria</taxon>
        <taxon>Bacillati</taxon>
        <taxon>Bacillota</taxon>
        <taxon>Clostridia</taxon>
        <taxon>Thermosediminibacterales</taxon>
        <taxon>Thermosediminibacteraceae</taxon>
        <taxon>Thermosediminibacter</taxon>
    </lineage>
</organism>
<dbReference type="EMBL" id="CP002131">
    <property type="protein sequence ID" value="ADL07085.1"/>
    <property type="molecule type" value="Genomic_DNA"/>
</dbReference>
<dbReference type="SMR" id="D9S0S1"/>
<dbReference type="STRING" id="555079.Toce_0304"/>
<dbReference type="KEGG" id="toc:Toce_0304"/>
<dbReference type="eggNOG" id="COG0310">
    <property type="taxonomic scope" value="Bacteria"/>
</dbReference>
<dbReference type="HOGENOM" id="CLU_052508_3_0_9"/>
<dbReference type="OrthoDB" id="9809846at2"/>
<dbReference type="UniPathway" id="UPA00148"/>
<dbReference type="Proteomes" id="UP000000272">
    <property type="component" value="Chromosome"/>
</dbReference>
<dbReference type="GO" id="GO:0043190">
    <property type="term" value="C:ATP-binding cassette (ABC) transporter complex"/>
    <property type="evidence" value="ECO:0007669"/>
    <property type="project" value="InterPro"/>
</dbReference>
<dbReference type="GO" id="GO:0015087">
    <property type="term" value="F:cobalt ion transmembrane transporter activity"/>
    <property type="evidence" value="ECO:0007669"/>
    <property type="project" value="UniProtKB-UniRule"/>
</dbReference>
<dbReference type="GO" id="GO:0009236">
    <property type="term" value="P:cobalamin biosynthetic process"/>
    <property type="evidence" value="ECO:0007669"/>
    <property type="project" value="UniProtKB-UniRule"/>
</dbReference>
<dbReference type="FunFam" id="1.10.1760.20:FF:000001">
    <property type="entry name" value="Cobalt transport protein CbiM"/>
    <property type="match status" value="1"/>
</dbReference>
<dbReference type="Gene3D" id="1.10.1760.20">
    <property type="match status" value="1"/>
</dbReference>
<dbReference type="HAMAP" id="MF_01462">
    <property type="entry name" value="CbiM"/>
    <property type="match status" value="1"/>
</dbReference>
<dbReference type="InterPro" id="IPR018024">
    <property type="entry name" value="CbiM"/>
</dbReference>
<dbReference type="InterPro" id="IPR002751">
    <property type="entry name" value="CbiM/NikMN"/>
</dbReference>
<dbReference type="NCBIfam" id="TIGR00123">
    <property type="entry name" value="cbiM"/>
    <property type="match status" value="1"/>
</dbReference>
<dbReference type="NCBIfam" id="NF006184">
    <property type="entry name" value="PRK08319.1"/>
    <property type="match status" value="1"/>
</dbReference>
<dbReference type="PANTHER" id="PTHR43627">
    <property type="match status" value="1"/>
</dbReference>
<dbReference type="PANTHER" id="PTHR43627:SF1">
    <property type="entry name" value="COBALT TRANSPORT PROTEIN CBIM"/>
    <property type="match status" value="1"/>
</dbReference>
<dbReference type="Pfam" id="PF01891">
    <property type="entry name" value="CbiM"/>
    <property type="match status" value="1"/>
</dbReference>
<keyword id="KW-1003">Cell membrane</keyword>
<keyword id="KW-0169">Cobalamin biosynthesis</keyword>
<keyword id="KW-0170">Cobalt</keyword>
<keyword id="KW-0171">Cobalt transport</keyword>
<keyword id="KW-0406">Ion transport</keyword>
<keyword id="KW-0472">Membrane</keyword>
<keyword id="KW-1185">Reference proteome</keyword>
<keyword id="KW-0732">Signal</keyword>
<keyword id="KW-0812">Transmembrane</keyword>
<keyword id="KW-1133">Transmembrane helix</keyword>
<keyword id="KW-0813">Transport</keyword>
<name>CBIM_THEOJ</name>
<protein>
    <recommendedName>
        <fullName evidence="1">Cobalt transport protein CbiM</fullName>
    </recommendedName>
    <alternativeName>
        <fullName evidence="1">Energy-coupling factor transporter probable substrate-capture protein CbiM</fullName>
        <shortName evidence="1">ECF transporter S component CbiM</shortName>
    </alternativeName>
</protein>
<reference key="1">
    <citation type="journal article" date="2010" name="Stand. Genomic Sci.">
        <title>Complete genome sequence of Thermosediminibacter oceani type strain (JW/IW-1228P).</title>
        <authorList>
            <person name="Pitluck S."/>
            <person name="Yasawong M."/>
            <person name="Munk C."/>
            <person name="Nolan M."/>
            <person name="Lapidus A."/>
            <person name="Lucas S."/>
            <person name="Glavina Del Rio T."/>
            <person name="Tice H."/>
            <person name="Cheng J.F."/>
            <person name="Bruce D."/>
            <person name="Detter C."/>
            <person name="Tapia R."/>
            <person name="Han C."/>
            <person name="Goodwin L."/>
            <person name="Liolios K."/>
            <person name="Ivanova N."/>
            <person name="Mavromatis K."/>
            <person name="Mikhailova N."/>
            <person name="Pati A."/>
            <person name="Chen A."/>
            <person name="Palaniappan K."/>
            <person name="Land M."/>
            <person name="Hauser L."/>
            <person name="Chang Y.J."/>
            <person name="Jeffries C.D."/>
            <person name="Rohde M."/>
            <person name="Spring S."/>
            <person name="Sikorski J."/>
            <person name="Goker M."/>
            <person name="Woyke T."/>
            <person name="Bristow J."/>
            <person name="Eisen J.A."/>
            <person name="Markowitz V."/>
            <person name="Hugenholtz P."/>
            <person name="Kyrpides N.C."/>
            <person name="Klenk H.P."/>
        </authorList>
    </citation>
    <scope>NUCLEOTIDE SEQUENCE [LARGE SCALE GENOMIC DNA]</scope>
    <source>
        <strain>ATCC BAA-1034 / DSM 16646 / JW/IW-1228P</strain>
    </source>
</reference>
<sequence length="244" mass="25214">MRKITFIAALLSLLPRYALAMHVMEGFLPFKWCLLWYSIYIPFLMAGLIYIKKNIAEEPSKKILLGFAGAFVFALSALKLPSVAGSSSHPTGIGLGAILLGPLPMAVIGGIVLLFQALLLAHGGITTLGANAFSMAVAGSFAAYGLYKVAGRVGLSKSASVFLGAASGDLMTYIITSLQLALAFPASRGGVAASFAGFSGIFAVTQLPLAIGEGILTVIVLNLLEIHAGVVVGRLVKGASNDEG</sequence>
<gene>
    <name evidence="1" type="primary">cbiM</name>
    <name type="ordered locus">Toce_0304</name>
</gene>
<evidence type="ECO:0000255" key="1">
    <source>
        <dbReference type="HAMAP-Rule" id="MF_01462"/>
    </source>
</evidence>
<proteinExistence type="inferred from homology"/>
<accession>D9S0S1</accession>
<feature type="signal peptide" evidence="1">
    <location>
        <begin position="1"/>
        <end position="20"/>
    </location>
</feature>
<feature type="chain" id="PRO_5000618879" description="Cobalt transport protein CbiM">
    <location>
        <begin position="21"/>
        <end position="244"/>
    </location>
</feature>
<feature type="transmembrane region" description="Helical" evidence="1">
    <location>
        <begin position="31"/>
        <end position="51"/>
    </location>
</feature>
<feature type="transmembrane region" description="Helical" evidence="1">
    <location>
        <begin position="63"/>
        <end position="83"/>
    </location>
</feature>
<feature type="transmembrane region" description="Helical" evidence="1">
    <location>
        <begin position="95"/>
        <end position="115"/>
    </location>
</feature>
<feature type="transmembrane region" description="Helical" evidence="1">
    <location>
        <begin position="117"/>
        <end position="137"/>
    </location>
</feature>
<feature type="transmembrane region" description="Helical" evidence="1">
    <location>
        <begin position="161"/>
        <end position="181"/>
    </location>
</feature>
<feature type="transmembrane region" description="Helical" evidence="1">
    <location>
        <begin position="201"/>
        <end position="221"/>
    </location>
</feature>